<protein>
    <recommendedName>
        <fullName>Uncharacterized protein in bps2 5'region</fullName>
    </recommendedName>
    <alternativeName>
        <fullName>ORF2</fullName>
    </alternativeName>
</protein>
<proteinExistence type="inferred from homology"/>
<organism>
    <name type="scientific">Acidianus ambivalens</name>
    <name type="common">Desulfurolobus ambivalens</name>
    <dbReference type="NCBI Taxonomy" id="2283"/>
    <lineage>
        <taxon>Archaea</taxon>
        <taxon>Thermoproteota</taxon>
        <taxon>Thermoprotei</taxon>
        <taxon>Sulfolobales</taxon>
        <taxon>Sulfolobaceae</taxon>
        <taxon>Acidianus</taxon>
    </lineage>
</organism>
<reference key="1">
    <citation type="submission" date="1992-01" db="EMBL/GenBank/DDBJ databases">
        <authorList>
            <person name="Kletzin A."/>
        </authorList>
    </citation>
    <scope>NUCLEOTIDE SEQUENCE [GENOMIC DNA]</scope>
    <source>
        <strain>Lei 10 / DSM 3772 / JCM 9191</strain>
    </source>
</reference>
<keyword id="KW-0326">Glycosidase</keyword>
<keyword id="KW-0378">Hydrolase</keyword>
<accession>P32986</accession>
<name>YBP2_ACIAM</name>
<feature type="chain" id="PRO_0000206840" description="Uncharacterized protein in bps2 5'region">
    <location>
        <begin position="1"/>
        <end position="171" status="greater than"/>
    </location>
</feature>
<feature type="non-terminal residue">
    <location>
        <position position="171"/>
    </location>
</feature>
<comment type="similarity">
    <text evidence="1">Belongs to the IUNH family.</text>
</comment>
<dbReference type="EMBL" id="X64202">
    <property type="protein sequence ID" value="CAA45527.1"/>
    <property type="molecule type" value="Genomic_DNA"/>
</dbReference>
<dbReference type="PIR" id="S22194">
    <property type="entry name" value="S22194"/>
</dbReference>
<dbReference type="SMR" id="P32986"/>
<dbReference type="GO" id="GO:0016799">
    <property type="term" value="F:hydrolase activity, hydrolyzing N-glycosyl compounds"/>
    <property type="evidence" value="ECO:0007669"/>
    <property type="project" value="InterPro"/>
</dbReference>
<dbReference type="Gene3D" id="3.90.245.10">
    <property type="entry name" value="Ribonucleoside hydrolase-like"/>
    <property type="match status" value="1"/>
</dbReference>
<dbReference type="InterPro" id="IPR015910">
    <property type="entry name" value="I/U_nuclsd_hydro_CS"/>
</dbReference>
<dbReference type="InterPro" id="IPR001910">
    <property type="entry name" value="Inosine/uridine_hydrolase_dom"/>
</dbReference>
<dbReference type="InterPro" id="IPR052775">
    <property type="entry name" value="IUN_hydrolase"/>
</dbReference>
<dbReference type="InterPro" id="IPR036452">
    <property type="entry name" value="Ribo_hydro-like"/>
</dbReference>
<dbReference type="PANTHER" id="PTHR46190:SF1">
    <property type="entry name" value="SI:CH211-201H21.5"/>
    <property type="match status" value="1"/>
</dbReference>
<dbReference type="PANTHER" id="PTHR46190">
    <property type="entry name" value="SI:CH211-201H21.5-RELATED"/>
    <property type="match status" value="1"/>
</dbReference>
<dbReference type="Pfam" id="PF01156">
    <property type="entry name" value="IU_nuc_hydro"/>
    <property type="match status" value="1"/>
</dbReference>
<dbReference type="SUPFAM" id="SSF53590">
    <property type="entry name" value="Nucleoside hydrolase"/>
    <property type="match status" value="1"/>
</dbReference>
<dbReference type="PROSITE" id="PS01247">
    <property type="entry name" value="IUNH"/>
    <property type="match status" value="1"/>
</dbReference>
<sequence length="171" mass="19028">MPRYAIIDSDTASDDTIAILLASKFFKLLGITIVAGNVKFENEIKNALFTVEYFNLDVPVFIGSSRPIMGKWSTVEEVHGNNGIGDWKIEEPKISPEKEHAIDAIIRLSKEYEGELEILAVSPLTNLALAYLKDPTIVKRIKKVWIMGGAFSRGNTTPIAEFNFWVDPEAA</sequence>
<evidence type="ECO:0000305" key="1"/>